<keyword id="KW-1015">Disulfide bond</keyword>
<keyword id="KW-0325">Glycoprotein</keyword>
<keyword id="KW-1043">Host membrane</keyword>
<keyword id="KW-0472">Membrane</keyword>
<keyword id="KW-1185">Reference proteome</keyword>
<keyword id="KW-0735">Signal-anchor</keyword>
<keyword id="KW-0812">Transmembrane</keyword>
<keyword id="KW-1133">Transmembrane helix</keyword>
<keyword id="KW-0261">Viral envelope protein</keyword>
<keyword id="KW-0946">Virion</keyword>
<proteinExistence type="evidence at protein level"/>
<organismHost>
    <name type="scientific">Homo sapiens</name>
    <name type="common">Human</name>
    <dbReference type="NCBI Taxonomy" id="9606"/>
</organismHost>
<sequence>MMTPENDEEQTSVFSATVYGDKIQGKNKRKRVIGICIRISMVISLLSMITMSAFLIVRLNQCMSANEAAITDATAVAAALSTHRKVASSTTQYKHQESCNGLYYQGSCYIFHSDYQLFSDAKANCATESSTLPNKSDVLTTWLIDYVEDTWGSDGNPITKTTTDYQDSDVSQEVRKYFCVKTMN</sequence>
<organism>
    <name type="scientific">Variola virus (isolate Human/India/Ind3/1967)</name>
    <name type="common">VARV</name>
    <name type="synonym">Smallpox virus</name>
    <dbReference type="NCBI Taxonomy" id="587200"/>
    <lineage>
        <taxon>Viruses</taxon>
        <taxon>Varidnaviria</taxon>
        <taxon>Bamfordvirae</taxon>
        <taxon>Nucleocytoviricota</taxon>
        <taxon>Pokkesviricetes</taxon>
        <taxon>Chitovirales</taxon>
        <taxon>Poxviridae</taxon>
        <taxon>Chordopoxvirinae</taxon>
        <taxon>Orthopoxvirus</taxon>
        <taxon>Variola virus</taxon>
    </lineage>
</organism>
<feature type="chain" id="PRO_0000099318" description="Protein OPG161">
    <location>
        <begin position="1"/>
        <end position="184"/>
    </location>
</feature>
<feature type="topological domain" description="Intravirion" evidence="1">
    <location>
        <begin position="1"/>
        <end position="33"/>
    </location>
</feature>
<feature type="transmembrane region" description="Helical" evidence="3">
    <location>
        <begin position="34"/>
        <end position="56"/>
    </location>
</feature>
<feature type="topological domain" description="Virion surface" evidence="1">
    <location>
        <begin position="57"/>
        <end position="184"/>
    </location>
</feature>
<feature type="region of interest" description="C-type lectin-like domain">
    <location>
        <begin position="98"/>
        <end position="184"/>
    </location>
</feature>
<feature type="glycosylation site" description="N-linked (GlcNAc...) asparagine; by host" evidence="3">
    <location>
        <position position="134"/>
    </location>
</feature>
<feature type="disulfide bond" description="Interchain">
    <location>
        <position position="62"/>
    </location>
</feature>
<dbReference type="EMBL" id="X69198">
    <property type="protein sequence ID" value="CAA49081.1"/>
    <property type="molecule type" value="Genomic_DNA"/>
</dbReference>
<dbReference type="EMBL" id="X67115">
    <property type="protein sequence ID" value="CAA47507.1"/>
    <property type="molecule type" value="Genomic_DNA"/>
</dbReference>
<dbReference type="PIR" id="A36852">
    <property type="entry name" value="A36852"/>
</dbReference>
<dbReference type="RefSeq" id="NP_042184.1">
    <property type="nucleotide sequence ID" value="NC_001611.1"/>
</dbReference>
<dbReference type="SMR" id="P0DON1"/>
<dbReference type="GeneID" id="1486514"/>
<dbReference type="KEGG" id="vg:1486514"/>
<dbReference type="Proteomes" id="UP000002060">
    <property type="component" value="Segment"/>
</dbReference>
<dbReference type="GO" id="GO:0033644">
    <property type="term" value="C:host cell membrane"/>
    <property type="evidence" value="ECO:0007669"/>
    <property type="project" value="UniProtKB-SubCell"/>
</dbReference>
<dbReference type="GO" id="GO:0016020">
    <property type="term" value="C:membrane"/>
    <property type="evidence" value="ECO:0007669"/>
    <property type="project" value="UniProtKB-KW"/>
</dbReference>
<dbReference type="GO" id="GO:0019031">
    <property type="term" value="C:viral envelope"/>
    <property type="evidence" value="ECO:0007669"/>
    <property type="project" value="UniProtKB-KW"/>
</dbReference>
<dbReference type="GO" id="GO:0055036">
    <property type="term" value="C:virion membrane"/>
    <property type="evidence" value="ECO:0007669"/>
    <property type="project" value="UniProtKB-SubCell"/>
</dbReference>
<dbReference type="Gene3D" id="3.10.100.10">
    <property type="entry name" value="Mannose-Binding Protein A, subunit A"/>
    <property type="match status" value="1"/>
</dbReference>
<dbReference type="InterPro" id="IPR016186">
    <property type="entry name" value="C-type_lectin-like/link_sf"/>
</dbReference>
<dbReference type="InterPro" id="IPR009238">
    <property type="entry name" value="Chordopox_A33R"/>
</dbReference>
<dbReference type="InterPro" id="IPR016187">
    <property type="entry name" value="CTDL_fold"/>
</dbReference>
<dbReference type="Pfam" id="PF05966">
    <property type="entry name" value="Chordopox_A33R"/>
    <property type="match status" value="1"/>
</dbReference>
<dbReference type="SUPFAM" id="SSF56436">
    <property type="entry name" value="C-type lectin-like"/>
    <property type="match status" value="1"/>
</dbReference>
<protein>
    <recommendedName>
        <fullName>Protein OPG161</fullName>
    </recommendedName>
</protein>
<gene>
    <name type="primary">OPG161</name>
    <name type="ORF">A33R</name>
    <name type="ORF">A36R</name>
</gene>
<reference key="1">
    <citation type="journal article" date="1993" name="FEBS Lett.">
        <title>Genes of variola and vaccinia viruses necessary to overcome the host protective mechanisms.</title>
        <authorList>
            <person name="Shchelkunov S.N."/>
            <person name="Blinov V.M."/>
            <person name="Sandakhchiev L.S."/>
        </authorList>
    </citation>
    <scope>NUCLEOTIDE SEQUENCE [GENOMIC DNA]</scope>
</reference>
<name>PG161_VAR67</name>
<evidence type="ECO:0000250" key="1"/>
<evidence type="ECO:0000250" key="2">
    <source>
        <dbReference type="UniProtKB" id="P68617"/>
    </source>
</evidence>
<evidence type="ECO:0000255" key="3"/>
<evidence type="ECO:0000305" key="4"/>
<comment type="function">
    <text evidence="2">Forms a complex with OPG162 and OPG190 to coordinate the incorporation of OPG164 into wrapped enveloped virion (EV) membranes and, subsequently, the production of actin tails. Therefore plays an essential role in efficient cell-to-cell spread of viral particles.</text>
</comment>
<comment type="subunit">
    <text evidence="2">Homodimer, disulfide-linked. Interacts with protein OPG190. Interacts (via C-terminus) with protein OPG164. Interacts with OPG162.</text>
</comment>
<comment type="subcellular location">
    <subcellularLocation>
        <location evidence="2">Virion membrane</location>
        <topology evidence="2">Single-pass type II membrane protein</topology>
    </subcellularLocation>
    <subcellularLocation>
        <location evidence="2">Host membrane</location>
        <topology evidence="2">Single-pass type II membrane protein</topology>
    </subcellularLocation>
    <text evidence="2">Component of the enveloped virion (EV) membrane.</text>
</comment>
<comment type="similarity">
    <text evidence="4">Belongs to the orthopoxvirus OPG161 family.</text>
</comment>
<accession>P0DON1</accession>
<accession>P33850</accession>